<dbReference type="EC" id="1.1.1.267" evidence="1"/>
<dbReference type="EMBL" id="CP000090">
    <property type="protein sequence ID" value="AAZ61240.1"/>
    <property type="molecule type" value="Genomic_DNA"/>
</dbReference>
<dbReference type="SMR" id="Q470E3"/>
<dbReference type="STRING" id="264198.Reut_A1875"/>
<dbReference type="KEGG" id="reu:Reut_A1875"/>
<dbReference type="eggNOG" id="COG0743">
    <property type="taxonomic scope" value="Bacteria"/>
</dbReference>
<dbReference type="HOGENOM" id="CLU_035714_4_0_4"/>
<dbReference type="OrthoDB" id="9806546at2"/>
<dbReference type="UniPathway" id="UPA00056">
    <property type="reaction ID" value="UER00092"/>
</dbReference>
<dbReference type="GO" id="GO:0030604">
    <property type="term" value="F:1-deoxy-D-xylulose-5-phosphate reductoisomerase activity"/>
    <property type="evidence" value="ECO:0007669"/>
    <property type="project" value="UniProtKB-UniRule"/>
</dbReference>
<dbReference type="GO" id="GO:0030145">
    <property type="term" value="F:manganese ion binding"/>
    <property type="evidence" value="ECO:0007669"/>
    <property type="project" value="TreeGrafter"/>
</dbReference>
<dbReference type="GO" id="GO:0070402">
    <property type="term" value="F:NADPH binding"/>
    <property type="evidence" value="ECO:0007669"/>
    <property type="project" value="InterPro"/>
</dbReference>
<dbReference type="GO" id="GO:0051484">
    <property type="term" value="P:isopentenyl diphosphate biosynthetic process, methylerythritol 4-phosphate pathway involved in terpenoid biosynthetic process"/>
    <property type="evidence" value="ECO:0007669"/>
    <property type="project" value="TreeGrafter"/>
</dbReference>
<dbReference type="FunFam" id="1.10.1740.10:FF:000004">
    <property type="entry name" value="1-deoxy-D-xylulose 5-phosphate reductoisomerase"/>
    <property type="match status" value="1"/>
</dbReference>
<dbReference type="FunFam" id="3.40.50.720:FF:000045">
    <property type="entry name" value="1-deoxy-D-xylulose 5-phosphate reductoisomerase"/>
    <property type="match status" value="1"/>
</dbReference>
<dbReference type="Gene3D" id="1.10.1740.10">
    <property type="match status" value="1"/>
</dbReference>
<dbReference type="Gene3D" id="3.40.50.720">
    <property type="entry name" value="NAD(P)-binding Rossmann-like Domain"/>
    <property type="match status" value="1"/>
</dbReference>
<dbReference type="HAMAP" id="MF_00183">
    <property type="entry name" value="DXP_reductoisom"/>
    <property type="match status" value="1"/>
</dbReference>
<dbReference type="InterPro" id="IPR003821">
    <property type="entry name" value="DXP_reductoisomerase"/>
</dbReference>
<dbReference type="InterPro" id="IPR013644">
    <property type="entry name" value="DXP_reductoisomerase_C"/>
</dbReference>
<dbReference type="InterPro" id="IPR013512">
    <property type="entry name" value="DXP_reductoisomerase_N"/>
</dbReference>
<dbReference type="InterPro" id="IPR026877">
    <property type="entry name" value="DXPR_C"/>
</dbReference>
<dbReference type="InterPro" id="IPR036169">
    <property type="entry name" value="DXPR_C_sf"/>
</dbReference>
<dbReference type="InterPro" id="IPR036291">
    <property type="entry name" value="NAD(P)-bd_dom_sf"/>
</dbReference>
<dbReference type="NCBIfam" id="TIGR00243">
    <property type="entry name" value="Dxr"/>
    <property type="match status" value="1"/>
</dbReference>
<dbReference type="NCBIfam" id="NF003938">
    <property type="entry name" value="PRK05447.1-1"/>
    <property type="match status" value="1"/>
</dbReference>
<dbReference type="NCBIfam" id="NF009114">
    <property type="entry name" value="PRK12464.1"/>
    <property type="match status" value="1"/>
</dbReference>
<dbReference type="PANTHER" id="PTHR30525">
    <property type="entry name" value="1-DEOXY-D-XYLULOSE 5-PHOSPHATE REDUCTOISOMERASE"/>
    <property type="match status" value="1"/>
</dbReference>
<dbReference type="PANTHER" id="PTHR30525:SF0">
    <property type="entry name" value="1-DEOXY-D-XYLULOSE 5-PHOSPHATE REDUCTOISOMERASE, CHLOROPLASTIC"/>
    <property type="match status" value="1"/>
</dbReference>
<dbReference type="Pfam" id="PF08436">
    <property type="entry name" value="DXP_redisom_C"/>
    <property type="match status" value="1"/>
</dbReference>
<dbReference type="Pfam" id="PF02670">
    <property type="entry name" value="DXP_reductoisom"/>
    <property type="match status" value="1"/>
</dbReference>
<dbReference type="Pfam" id="PF13288">
    <property type="entry name" value="DXPR_C"/>
    <property type="match status" value="1"/>
</dbReference>
<dbReference type="PIRSF" id="PIRSF006205">
    <property type="entry name" value="Dxp_reductismrs"/>
    <property type="match status" value="1"/>
</dbReference>
<dbReference type="SUPFAM" id="SSF69055">
    <property type="entry name" value="1-deoxy-D-xylulose-5-phosphate reductoisomerase, C-terminal domain"/>
    <property type="match status" value="1"/>
</dbReference>
<dbReference type="SUPFAM" id="SSF55347">
    <property type="entry name" value="Glyceraldehyde-3-phosphate dehydrogenase-like, C-terminal domain"/>
    <property type="match status" value="1"/>
</dbReference>
<dbReference type="SUPFAM" id="SSF51735">
    <property type="entry name" value="NAD(P)-binding Rossmann-fold domains"/>
    <property type="match status" value="1"/>
</dbReference>
<organism>
    <name type="scientific">Cupriavidus pinatubonensis (strain JMP 134 / LMG 1197)</name>
    <name type="common">Cupriavidus necator (strain JMP 134)</name>
    <dbReference type="NCBI Taxonomy" id="264198"/>
    <lineage>
        <taxon>Bacteria</taxon>
        <taxon>Pseudomonadati</taxon>
        <taxon>Pseudomonadota</taxon>
        <taxon>Betaproteobacteria</taxon>
        <taxon>Burkholderiales</taxon>
        <taxon>Burkholderiaceae</taxon>
        <taxon>Cupriavidus</taxon>
    </lineage>
</organism>
<proteinExistence type="inferred from homology"/>
<evidence type="ECO:0000255" key="1">
    <source>
        <dbReference type="HAMAP-Rule" id="MF_00183"/>
    </source>
</evidence>
<reference key="1">
    <citation type="journal article" date="2010" name="PLoS ONE">
        <title>The complete multipartite genome sequence of Cupriavidus necator JMP134, a versatile pollutant degrader.</title>
        <authorList>
            <person name="Lykidis A."/>
            <person name="Perez-Pantoja D."/>
            <person name="Ledger T."/>
            <person name="Mavromatis K."/>
            <person name="Anderson I.J."/>
            <person name="Ivanova N.N."/>
            <person name="Hooper S.D."/>
            <person name="Lapidus A."/>
            <person name="Lucas S."/>
            <person name="Gonzalez B."/>
            <person name="Kyrpides N.C."/>
        </authorList>
    </citation>
    <scope>NUCLEOTIDE SEQUENCE [LARGE SCALE GENOMIC DNA]</scope>
    <source>
        <strain>JMP134 / LMG 1197</strain>
    </source>
</reference>
<sequence>MHRITILGATGSIGESTLDVVRRHADRYAVHALTAHRQVQKLAASCIEFRPARAVVGTSEAAAELEALLRMAGVKTEVSHGEAALESVASDAQTDSVMAAIVGAAGLRPTLAAARAGKRVLLANKEALVMSGRIFMDAVREHGATLLPIDSEHNAIFQCLPANDQRYRAGVAKVVLTASGGPFRTRDPATLHDITPDQACAHPNWVMGRKISVDSATMMNKGLEVIEAHWLFGAPAEHIEVLIHPQSIVHSMVAYRDGSVLAQLGNPDMRTPIAYGLAYPERIDAGVSPLDLTLAGALNFEKPDLVRFPCLALAFDALRAGGVAPAVLNAANEVAVEAFLQGGIRFTDIARIVGNVLEKAPHGAADSLECVLEADQLARQSARACLQDVTTSAVR</sequence>
<protein>
    <recommendedName>
        <fullName evidence="1">1-deoxy-D-xylulose 5-phosphate reductoisomerase</fullName>
        <shortName evidence="1">DXP reductoisomerase</shortName>
        <ecNumber evidence="1">1.1.1.267</ecNumber>
    </recommendedName>
    <alternativeName>
        <fullName evidence="1">1-deoxyxylulose-5-phosphate reductoisomerase</fullName>
    </alternativeName>
    <alternativeName>
        <fullName evidence="1">2-C-methyl-D-erythritol 4-phosphate synthase</fullName>
    </alternativeName>
</protein>
<accession>Q470E3</accession>
<gene>
    <name evidence="1" type="primary">dxr</name>
    <name type="ordered locus">Reut_A1875</name>
</gene>
<comment type="function">
    <text evidence="1">Catalyzes the NADPH-dependent rearrangement and reduction of 1-deoxy-D-xylulose-5-phosphate (DXP) to 2-C-methyl-D-erythritol 4-phosphate (MEP).</text>
</comment>
<comment type="catalytic activity">
    <reaction evidence="1">
        <text>2-C-methyl-D-erythritol 4-phosphate + NADP(+) = 1-deoxy-D-xylulose 5-phosphate + NADPH + H(+)</text>
        <dbReference type="Rhea" id="RHEA:13717"/>
        <dbReference type="ChEBI" id="CHEBI:15378"/>
        <dbReference type="ChEBI" id="CHEBI:57783"/>
        <dbReference type="ChEBI" id="CHEBI:57792"/>
        <dbReference type="ChEBI" id="CHEBI:58262"/>
        <dbReference type="ChEBI" id="CHEBI:58349"/>
        <dbReference type="EC" id="1.1.1.267"/>
    </reaction>
    <physiologicalReaction direction="right-to-left" evidence="1">
        <dbReference type="Rhea" id="RHEA:13719"/>
    </physiologicalReaction>
</comment>
<comment type="cofactor">
    <cofactor evidence="1">
        <name>Mg(2+)</name>
        <dbReference type="ChEBI" id="CHEBI:18420"/>
    </cofactor>
    <cofactor evidence="1">
        <name>Mn(2+)</name>
        <dbReference type="ChEBI" id="CHEBI:29035"/>
    </cofactor>
</comment>
<comment type="pathway">
    <text evidence="1">Isoprenoid biosynthesis; isopentenyl diphosphate biosynthesis via DXP pathway; isopentenyl diphosphate from 1-deoxy-D-xylulose 5-phosphate: step 1/6.</text>
</comment>
<comment type="similarity">
    <text evidence="1">Belongs to the DXR family.</text>
</comment>
<name>DXR_CUPPJ</name>
<feature type="chain" id="PRO_1000058416" description="1-deoxy-D-xylulose 5-phosphate reductoisomerase">
    <location>
        <begin position="1"/>
        <end position="395"/>
    </location>
</feature>
<feature type="binding site" evidence="1">
    <location>
        <position position="10"/>
    </location>
    <ligand>
        <name>NADPH</name>
        <dbReference type="ChEBI" id="CHEBI:57783"/>
    </ligand>
</feature>
<feature type="binding site" evidence="1">
    <location>
        <position position="11"/>
    </location>
    <ligand>
        <name>NADPH</name>
        <dbReference type="ChEBI" id="CHEBI:57783"/>
    </ligand>
</feature>
<feature type="binding site" evidence="1">
    <location>
        <position position="12"/>
    </location>
    <ligand>
        <name>NADPH</name>
        <dbReference type="ChEBI" id="CHEBI:57783"/>
    </ligand>
</feature>
<feature type="binding site" evidence="1">
    <location>
        <position position="13"/>
    </location>
    <ligand>
        <name>NADPH</name>
        <dbReference type="ChEBI" id="CHEBI:57783"/>
    </ligand>
</feature>
<feature type="binding site" evidence="1">
    <location>
        <position position="37"/>
    </location>
    <ligand>
        <name>NADPH</name>
        <dbReference type="ChEBI" id="CHEBI:57783"/>
    </ligand>
</feature>
<feature type="binding site" evidence="1">
    <location>
        <position position="38"/>
    </location>
    <ligand>
        <name>NADPH</name>
        <dbReference type="ChEBI" id="CHEBI:57783"/>
    </ligand>
</feature>
<feature type="binding site" evidence="1">
    <location>
        <position position="124"/>
    </location>
    <ligand>
        <name>NADPH</name>
        <dbReference type="ChEBI" id="CHEBI:57783"/>
    </ligand>
</feature>
<feature type="binding site" evidence="1">
    <location>
        <position position="125"/>
    </location>
    <ligand>
        <name>1-deoxy-D-xylulose 5-phosphate</name>
        <dbReference type="ChEBI" id="CHEBI:57792"/>
    </ligand>
</feature>
<feature type="binding site" evidence="1">
    <location>
        <position position="126"/>
    </location>
    <ligand>
        <name>NADPH</name>
        <dbReference type="ChEBI" id="CHEBI:57783"/>
    </ligand>
</feature>
<feature type="binding site" evidence="1">
    <location>
        <position position="150"/>
    </location>
    <ligand>
        <name>Mn(2+)</name>
        <dbReference type="ChEBI" id="CHEBI:29035"/>
    </ligand>
</feature>
<feature type="binding site" evidence="1">
    <location>
        <position position="151"/>
    </location>
    <ligand>
        <name>1-deoxy-D-xylulose 5-phosphate</name>
        <dbReference type="ChEBI" id="CHEBI:57792"/>
    </ligand>
</feature>
<feature type="binding site" evidence="1">
    <location>
        <position position="152"/>
    </location>
    <ligand>
        <name>1-deoxy-D-xylulose 5-phosphate</name>
        <dbReference type="ChEBI" id="CHEBI:57792"/>
    </ligand>
</feature>
<feature type="binding site" evidence="1">
    <location>
        <position position="152"/>
    </location>
    <ligand>
        <name>Mn(2+)</name>
        <dbReference type="ChEBI" id="CHEBI:29035"/>
    </ligand>
</feature>
<feature type="binding site" evidence="1">
    <location>
        <position position="179"/>
    </location>
    <ligand>
        <name>1-deoxy-D-xylulose 5-phosphate</name>
        <dbReference type="ChEBI" id="CHEBI:57792"/>
    </ligand>
</feature>
<feature type="binding site" evidence="1">
    <location>
        <position position="202"/>
    </location>
    <ligand>
        <name>1-deoxy-D-xylulose 5-phosphate</name>
        <dbReference type="ChEBI" id="CHEBI:57792"/>
    </ligand>
</feature>
<feature type="binding site" evidence="1">
    <location>
        <position position="208"/>
    </location>
    <ligand>
        <name>NADPH</name>
        <dbReference type="ChEBI" id="CHEBI:57783"/>
    </ligand>
</feature>
<feature type="binding site" evidence="1">
    <location>
        <position position="215"/>
    </location>
    <ligand>
        <name>1-deoxy-D-xylulose 5-phosphate</name>
        <dbReference type="ChEBI" id="CHEBI:57792"/>
    </ligand>
</feature>
<feature type="binding site" evidence="1">
    <location>
        <position position="220"/>
    </location>
    <ligand>
        <name>1-deoxy-D-xylulose 5-phosphate</name>
        <dbReference type="ChEBI" id="CHEBI:57792"/>
    </ligand>
</feature>
<feature type="binding site" evidence="1">
    <location>
        <position position="221"/>
    </location>
    <ligand>
        <name>1-deoxy-D-xylulose 5-phosphate</name>
        <dbReference type="ChEBI" id="CHEBI:57792"/>
    </ligand>
</feature>
<feature type="binding site" evidence="1">
    <location>
        <position position="224"/>
    </location>
    <ligand>
        <name>1-deoxy-D-xylulose 5-phosphate</name>
        <dbReference type="ChEBI" id="CHEBI:57792"/>
    </ligand>
</feature>
<feature type="binding site" evidence="1">
    <location>
        <position position="224"/>
    </location>
    <ligand>
        <name>Mn(2+)</name>
        <dbReference type="ChEBI" id="CHEBI:29035"/>
    </ligand>
</feature>
<keyword id="KW-0414">Isoprene biosynthesis</keyword>
<keyword id="KW-0464">Manganese</keyword>
<keyword id="KW-0479">Metal-binding</keyword>
<keyword id="KW-0521">NADP</keyword>
<keyword id="KW-0560">Oxidoreductase</keyword>